<feature type="chain" id="PRO_0000011062" description="Glutathione hydrolase 1 heavy chain">
    <location>
        <begin position="1"/>
        <end position="379"/>
    </location>
</feature>
<feature type="chain" id="PRO_0000011063" description="Glutathione hydrolase 1 light chain">
    <location>
        <begin position="380"/>
        <end position="568"/>
    </location>
</feature>
<feature type="topological domain" description="Cytoplasmic" evidence="1">
    <location>
        <begin position="1"/>
        <end position="4"/>
    </location>
</feature>
<feature type="transmembrane region" description="Helical; Signal-anchor for type II membrane protein" evidence="1">
    <location>
        <begin position="5"/>
        <end position="26"/>
    </location>
</feature>
<feature type="topological domain" description="Extracellular" evidence="1">
    <location>
        <begin position="27"/>
        <end position="568"/>
    </location>
</feature>
<feature type="active site" description="Nucleophile" evidence="2">
    <location>
        <position position="380"/>
    </location>
</feature>
<feature type="binding site" evidence="2">
    <location>
        <position position="106"/>
    </location>
    <ligand>
        <name>L-glutamate</name>
        <dbReference type="ChEBI" id="CHEBI:29985"/>
    </ligand>
</feature>
<feature type="binding site" evidence="2">
    <location>
        <begin position="398"/>
        <end position="400"/>
    </location>
    <ligand>
        <name>L-glutamate</name>
        <dbReference type="ChEBI" id="CHEBI:29985"/>
    </ligand>
</feature>
<feature type="binding site" evidence="2">
    <location>
        <position position="419"/>
    </location>
    <ligand>
        <name>L-glutamate</name>
        <dbReference type="ChEBI" id="CHEBI:29985"/>
    </ligand>
</feature>
<feature type="binding site" evidence="2">
    <location>
        <position position="422"/>
    </location>
    <ligand>
        <name>L-glutamate</name>
        <dbReference type="ChEBI" id="CHEBI:29985"/>
    </ligand>
</feature>
<feature type="binding site" evidence="2">
    <location>
        <begin position="450"/>
        <end position="451"/>
    </location>
    <ligand>
        <name>L-glutamate</name>
        <dbReference type="ChEBI" id="CHEBI:29985"/>
    </ligand>
</feature>
<feature type="binding site" evidence="2">
    <location>
        <position position="473"/>
    </location>
    <ligand>
        <name>L-glutamate</name>
        <dbReference type="ChEBI" id="CHEBI:29985"/>
    </ligand>
</feature>
<feature type="glycosylation site" description="N-linked (GlcNAc...) asparagine" evidence="3">
    <location>
        <position position="94"/>
    </location>
</feature>
<feature type="glycosylation site" description="N-linked (GlcNAc...) asparagine" evidence="3">
    <location>
        <position position="119"/>
    </location>
</feature>
<feature type="glycosylation site" description="N-linked (GlcNAc...) asparagine" evidence="3">
    <location>
        <position position="229"/>
    </location>
</feature>
<feature type="glycosylation site" description="N-linked (GlcNAc...) asparagine" evidence="3">
    <location>
        <position position="296"/>
    </location>
</feature>
<feature type="glycosylation site" description="N-linked (GlcNAc...) asparagine" evidence="3">
    <location>
        <position position="336"/>
    </location>
</feature>
<feature type="glycosylation site" description="N-linked (GlcNAc...) asparagine" evidence="3">
    <location>
        <position position="343"/>
    </location>
</feature>
<feature type="glycosylation site" description="N-linked (GlcNAc...) asparagine" evidence="3">
    <location>
        <position position="427"/>
    </location>
</feature>
<feature type="glycosylation site" description="N-linked (GlcNAc...) asparagine" evidence="3">
    <location>
        <position position="510"/>
    </location>
</feature>
<feature type="disulfide bond" evidence="2">
    <location>
        <begin position="49"/>
        <end position="73"/>
    </location>
</feature>
<feature type="disulfide bond" evidence="2">
    <location>
        <begin position="191"/>
        <end position="195"/>
    </location>
</feature>
<evidence type="ECO:0000250" key="1">
    <source>
        <dbReference type="UniProtKB" id="P07314"/>
    </source>
</evidence>
<evidence type="ECO:0000250" key="2">
    <source>
        <dbReference type="UniProtKB" id="P19440"/>
    </source>
</evidence>
<evidence type="ECO:0000255" key="3"/>
<evidence type="ECO:0000305" key="4"/>
<name>GGT1_PIG</name>
<organism>
    <name type="scientific">Sus scrofa</name>
    <name type="common">Pig</name>
    <dbReference type="NCBI Taxonomy" id="9823"/>
    <lineage>
        <taxon>Eukaryota</taxon>
        <taxon>Metazoa</taxon>
        <taxon>Chordata</taxon>
        <taxon>Craniata</taxon>
        <taxon>Vertebrata</taxon>
        <taxon>Euteleostomi</taxon>
        <taxon>Mammalia</taxon>
        <taxon>Eutheria</taxon>
        <taxon>Laurasiatheria</taxon>
        <taxon>Artiodactyla</taxon>
        <taxon>Suina</taxon>
        <taxon>Suidae</taxon>
        <taxon>Sus</taxon>
    </lineage>
</organism>
<dbReference type="EC" id="3.4.19.13" evidence="2"/>
<dbReference type="EC" id="2.3.2.2" evidence="2"/>
<dbReference type="EC" id="3.4.19.14" evidence="1"/>
<dbReference type="EMBL" id="Z46922">
    <property type="protein sequence ID" value="CAA87031.1"/>
    <property type="molecule type" value="mRNA"/>
</dbReference>
<dbReference type="EMBL" id="X16533">
    <property type="protein sequence ID" value="CAA34536.1"/>
    <property type="molecule type" value="Genomic_DNA"/>
</dbReference>
<dbReference type="EMBL" id="AB271954">
    <property type="protein sequence ID" value="BAF62329.1"/>
    <property type="molecule type" value="mRNA"/>
</dbReference>
<dbReference type="PIR" id="S05532">
    <property type="entry name" value="S05532"/>
</dbReference>
<dbReference type="RefSeq" id="NP_999195.1">
    <property type="nucleotide sequence ID" value="NM_214030.1"/>
</dbReference>
<dbReference type="SMR" id="P20735"/>
<dbReference type="FunCoup" id="P20735">
    <property type="interactions" value="224"/>
</dbReference>
<dbReference type="STRING" id="9823.ENSSSCP00000030498"/>
<dbReference type="GlyCosmos" id="P20735">
    <property type="glycosylation" value="8 sites, No reported glycans"/>
</dbReference>
<dbReference type="GlyGen" id="P20735">
    <property type="glycosylation" value="9 sites"/>
</dbReference>
<dbReference type="PaxDb" id="9823-ENSSSCP00000028318"/>
<dbReference type="PeptideAtlas" id="P20735"/>
<dbReference type="Ensembl" id="ENSSSCT00115031160">
    <property type="protein sequence ID" value="ENSSSCP00115029619"/>
    <property type="gene ID" value="ENSSSCG00115017613"/>
</dbReference>
<dbReference type="Ensembl" id="ENSSSCT00130075881">
    <property type="protein sequence ID" value="ENSSSCP00130054577"/>
    <property type="gene ID" value="ENSSSCG00130038954"/>
</dbReference>
<dbReference type="GeneID" id="397095"/>
<dbReference type="KEGG" id="ssc:397095"/>
<dbReference type="CTD" id="2678"/>
<dbReference type="eggNOG" id="KOG2410">
    <property type="taxonomic scope" value="Eukaryota"/>
</dbReference>
<dbReference type="InParanoid" id="P20735"/>
<dbReference type="OrthoDB" id="1081007at2759"/>
<dbReference type="UniPathway" id="UPA00204"/>
<dbReference type="UniPathway" id="UPA00880"/>
<dbReference type="Proteomes" id="UP000008227">
    <property type="component" value="Unplaced"/>
</dbReference>
<dbReference type="Proteomes" id="UP000314985">
    <property type="component" value="Unplaced"/>
</dbReference>
<dbReference type="Proteomes" id="UP000694570">
    <property type="component" value="Unplaced"/>
</dbReference>
<dbReference type="Proteomes" id="UP000694571">
    <property type="component" value="Unplaced"/>
</dbReference>
<dbReference type="Proteomes" id="UP000694720">
    <property type="component" value="Unplaced"/>
</dbReference>
<dbReference type="Proteomes" id="UP000694722">
    <property type="component" value="Unplaced"/>
</dbReference>
<dbReference type="Proteomes" id="UP000694723">
    <property type="component" value="Unplaced"/>
</dbReference>
<dbReference type="Proteomes" id="UP000694724">
    <property type="component" value="Unplaced"/>
</dbReference>
<dbReference type="Proteomes" id="UP000694725">
    <property type="component" value="Unplaced"/>
</dbReference>
<dbReference type="Proteomes" id="UP000694726">
    <property type="component" value="Unplaced"/>
</dbReference>
<dbReference type="Proteomes" id="UP000694727">
    <property type="component" value="Unplaced"/>
</dbReference>
<dbReference type="Proteomes" id="UP000694728">
    <property type="component" value="Unplaced"/>
</dbReference>
<dbReference type="GO" id="GO:0005886">
    <property type="term" value="C:plasma membrane"/>
    <property type="evidence" value="ECO:0000250"/>
    <property type="project" value="UniProtKB"/>
</dbReference>
<dbReference type="GO" id="GO:0036374">
    <property type="term" value="F:glutathione hydrolase activity"/>
    <property type="evidence" value="ECO:0000250"/>
    <property type="project" value="UniProtKB"/>
</dbReference>
<dbReference type="GO" id="GO:0103068">
    <property type="term" value="F:leukotriene C4 gamma-glutamyl transferase activity"/>
    <property type="evidence" value="ECO:0007669"/>
    <property type="project" value="UniProtKB-EC"/>
</dbReference>
<dbReference type="GO" id="GO:0002951">
    <property type="term" value="F:leukotriene-C(4) hydrolase"/>
    <property type="evidence" value="ECO:0007669"/>
    <property type="project" value="UniProtKB-EC"/>
</dbReference>
<dbReference type="GO" id="GO:0006536">
    <property type="term" value="P:glutamate metabolic process"/>
    <property type="evidence" value="ECO:0000250"/>
    <property type="project" value="UniProtKB"/>
</dbReference>
<dbReference type="GO" id="GO:0006750">
    <property type="term" value="P:glutathione biosynthetic process"/>
    <property type="evidence" value="ECO:0007669"/>
    <property type="project" value="UniProtKB-KW"/>
</dbReference>
<dbReference type="GO" id="GO:0006751">
    <property type="term" value="P:glutathione catabolic process"/>
    <property type="evidence" value="ECO:0000250"/>
    <property type="project" value="UniProtKB"/>
</dbReference>
<dbReference type="GO" id="GO:0031179">
    <property type="term" value="P:peptide modification"/>
    <property type="evidence" value="ECO:0000318"/>
    <property type="project" value="GO_Central"/>
</dbReference>
<dbReference type="GO" id="GO:0002682">
    <property type="term" value="P:regulation of immune system process"/>
    <property type="evidence" value="ECO:0000318"/>
    <property type="project" value="GO_Central"/>
</dbReference>
<dbReference type="GO" id="GO:0050727">
    <property type="term" value="P:regulation of inflammatory response"/>
    <property type="evidence" value="ECO:0000318"/>
    <property type="project" value="GO_Central"/>
</dbReference>
<dbReference type="GO" id="GO:0031638">
    <property type="term" value="P:zymogen activation"/>
    <property type="evidence" value="ECO:0000250"/>
    <property type="project" value="UniProtKB"/>
</dbReference>
<dbReference type="FunFam" id="3.60.20.40:FF:000007">
    <property type="entry name" value="Glutathione hydrolase 1 proenzyme"/>
    <property type="match status" value="1"/>
</dbReference>
<dbReference type="FunFam" id="1.10.246.130:FF:000002">
    <property type="entry name" value="glutathione hydrolase 1 proenzyme"/>
    <property type="match status" value="1"/>
</dbReference>
<dbReference type="Gene3D" id="1.10.246.130">
    <property type="match status" value="1"/>
</dbReference>
<dbReference type="Gene3D" id="3.60.20.40">
    <property type="match status" value="1"/>
</dbReference>
<dbReference type="InterPro" id="IPR055262">
    <property type="entry name" value="GGT_CS"/>
</dbReference>
<dbReference type="InterPro" id="IPR043138">
    <property type="entry name" value="GGT_lsub_C"/>
</dbReference>
<dbReference type="InterPro" id="IPR000101">
    <property type="entry name" value="GGT_peptidase"/>
</dbReference>
<dbReference type="InterPro" id="IPR043137">
    <property type="entry name" value="GGT_ssub"/>
</dbReference>
<dbReference type="InterPro" id="IPR029055">
    <property type="entry name" value="Ntn_hydrolases_N"/>
</dbReference>
<dbReference type="NCBIfam" id="TIGR00066">
    <property type="entry name" value="g_glut_trans"/>
    <property type="match status" value="1"/>
</dbReference>
<dbReference type="PANTHER" id="PTHR11686">
    <property type="entry name" value="GAMMA GLUTAMYL TRANSPEPTIDASE"/>
    <property type="match status" value="1"/>
</dbReference>
<dbReference type="PANTHER" id="PTHR11686:SF56">
    <property type="entry name" value="GLUTATHIONE HYDROLASE 1 PROENZYME-RELATED"/>
    <property type="match status" value="1"/>
</dbReference>
<dbReference type="Pfam" id="PF01019">
    <property type="entry name" value="G_glu_transpept"/>
    <property type="match status" value="1"/>
</dbReference>
<dbReference type="PRINTS" id="PR01210">
    <property type="entry name" value="GGTRANSPTASE"/>
</dbReference>
<dbReference type="SUPFAM" id="SSF56235">
    <property type="entry name" value="N-terminal nucleophile aminohydrolases (Ntn hydrolases)"/>
    <property type="match status" value="1"/>
</dbReference>
<dbReference type="PROSITE" id="PS00462">
    <property type="entry name" value="G_GLU_TRANSPEPTIDASE"/>
    <property type="match status" value="1"/>
</dbReference>
<reference key="1">
    <citation type="journal article" date="1989" name="Eur. J. Biochem.">
        <title>Cloning and expression of gamma-glutamyl transpeptidase from isolated porcine brain capillaries.</title>
        <authorList>
            <person name="Papandrikopoulou A."/>
            <person name="Frey A."/>
            <person name="Gassen H.G."/>
        </authorList>
    </citation>
    <scope>NUCLEOTIDE SEQUENCE [MRNA]</scope>
    <scope>NUCLEOTIDE SEQUENCE [GENOMIC DNA] OF 1-18</scope>
    <source>
        <tissue>Brain capillary</tissue>
    </source>
</reference>
<reference key="2">
    <citation type="submission" date="2006-09" db="EMBL/GenBank/DDBJ databases">
        <title>Sequences and genetic variations of fourty-four porcine coat color related genes.</title>
        <authorList>
            <person name="Okumura N."/>
            <person name="Matsumoto T."/>
            <person name="Hamasima N."/>
            <person name="Uenishi H."/>
            <person name="Ogawa T."/>
            <person name="Komatsuda A."/>
            <person name="Fukudome N."/>
            <person name="Ide H."/>
            <person name="Suzuki A."/>
            <person name="Kojima C."/>
            <person name="Awata T."/>
        </authorList>
    </citation>
    <scope>NUCLEOTIDE SEQUENCE [MRNA]</scope>
</reference>
<reference key="3">
    <citation type="journal article" date="1999" name="Comp. Biochem. Physiol.">
        <title>Gamma-glutamyl transpeptidase gene organization and expression: a comparative analysis in rat, mouse, pig and human species.</title>
        <authorList>
            <person name="Chikhi N."/>
            <person name="Holic N."/>
            <person name="Guellaen G."/>
            <person name="Laperche Y."/>
        </authorList>
    </citation>
    <scope>GENE ORGANIZATION</scope>
    <scope>ALTERNATIVE PROMOTER USAGE</scope>
</reference>
<comment type="function">
    <text evidence="2">Cleaves the gamma-glutamyl bond of extracellular glutathione (gamma-Glu-Cys-Gly), glutathione conjugates (such as maresin conjugate (13R)-S-glutathionyl-(14S)-hydroxy-(4Z,7Z,9E,11E,16Z,19Z)-docosahexaenoate, MCTR1) and other gamma-glutamyl compounds (such as leukotriene C4, LTC4). The metabolism of glutathione by GGT1 releases free glutamate and the dipeptide cysteinyl-glycine, which is hydrolyzed to cysteine and glycine by dipeptidases. In the presence of high concentrations of dipeptides and some amino acids, can also catalyze a transpeptidation reaction, transferring the gamma-glutamyl moiety to an acceptor amino acid to form a new gamma-glutamyl compound. Contributes to cysteine homeostasis, glutathione homeostasis and in the conversion of the leukotriene LTC4 to LTD4.</text>
</comment>
<comment type="catalytic activity">
    <reaction evidence="2">
        <text>an N-terminal (5-L-glutamyl)-[peptide] + an alpha-amino acid = 5-L-glutamyl amino acid + an N-terminal L-alpha-aminoacyl-[peptide]</text>
        <dbReference type="Rhea" id="RHEA:23904"/>
        <dbReference type="Rhea" id="RHEA-COMP:9780"/>
        <dbReference type="Rhea" id="RHEA-COMP:9795"/>
        <dbReference type="ChEBI" id="CHEBI:77644"/>
        <dbReference type="ChEBI" id="CHEBI:78597"/>
        <dbReference type="ChEBI" id="CHEBI:78599"/>
        <dbReference type="ChEBI" id="CHEBI:78608"/>
        <dbReference type="EC" id="2.3.2.2"/>
    </reaction>
    <physiologicalReaction direction="left-to-right" evidence="2">
        <dbReference type="Rhea" id="RHEA:23905"/>
    </physiologicalReaction>
    <physiologicalReaction direction="right-to-left" evidence="1">
        <dbReference type="Rhea" id="RHEA:23906"/>
    </physiologicalReaction>
</comment>
<comment type="catalytic activity">
    <reaction evidence="2">
        <text>glutathione + H2O = L-cysteinylglycine + L-glutamate</text>
        <dbReference type="Rhea" id="RHEA:28807"/>
        <dbReference type="ChEBI" id="CHEBI:15377"/>
        <dbReference type="ChEBI" id="CHEBI:29985"/>
        <dbReference type="ChEBI" id="CHEBI:57925"/>
        <dbReference type="ChEBI" id="CHEBI:61694"/>
        <dbReference type="EC" id="3.4.19.13"/>
    </reaction>
    <physiologicalReaction direction="left-to-right" evidence="2">
        <dbReference type="Rhea" id="RHEA:28808"/>
    </physiologicalReaction>
</comment>
<comment type="catalytic activity">
    <reaction evidence="2">
        <text>an S-substituted glutathione + H2O = an S-substituted L-cysteinylglycine + L-glutamate</text>
        <dbReference type="Rhea" id="RHEA:59468"/>
        <dbReference type="ChEBI" id="CHEBI:15377"/>
        <dbReference type="ChEBI" id="CHEBI:29985"/>
        <dbReference type="ChEBI" id="CHEBI:90779"/>
        <dbReference type="ChEBI" id="CHEBI:143103"/>
        <dbReference type="EC" id="3.4.19.13"/>
    </reaction>
    <physiologicalReaction direction="left-to-right" evidence="2">
        <dbReference type="Rhea" id="RHEA:59469"/>
    </physiologicalReaction>
</comment>
<comment type="catalytic activity">
    <reaction evidence="1">
        <text>leukotriene C4 + H2O = leukotriene D4 + L-glutamate</text>
        <dbReference type="Rhea" id="RHEA:31563"/>
        <dbReference type="ChEBI" id="CHEBI:15377"/>
        <dbReference type="ChEBI" id="CHEBI:29985"/>
        <dbReference type="ChEBI" id="CHEBI:57973"/>
        <dbReference type="ChEBI" id="CHEBI:63166"/>
        <dbReference type="EC" id="3.4.19.14"/>
    </reaction>
    <physiologicalReaction direction="left-to-right" evidence="2">
        <dbReference type="Rhea" id="RHEA:31564"/>
    </physiologicalReaction>
</comment>
<comment type="catalytic activity">
    <reaction evidence="2">
        <text>(13R)-S-glutathionyl-(14S)-hydroxy-(4Z,7Z,9E,11E,16Z,19Z)-docosahexaenoate + H2O = (13R)-S-cysteinylglycyl-(14S)-hydroxy-(4Z,7Z,9E,11E,16Z,19Z)-docosahexaenoate + L-glutamate</text>
        <dbReference type="Rhea" id="RHEA:53512"/>
        <dbReference type="ChEBI" id="CHEBI:15377"/>
        <dbReference type="ChEBI" id="CHEBI:29985"/>
        <dbReference type="ChEBI" id="CHEBI:137407"/>
        <dbReference type="ChEBI" id="CHEBI:137408"/>
    </reaction>
    <physiologicalReaction direction="left-to-right" evidence="2">
        <dbReference type="Rhea" id="RHEA:53513"/>
    </physiologicalReaction>
</comment>
<comment type="activity regulation">
    <text evidence="2">Activated by autocatalytic cleavage.</text>
</comment>
<comment type="pathway">
    <text>Sulfur metabolism; glutathione metabolism.</text>
</comment>
<comment type="pathway">
    <text evidence="2">Lipid metabolism; leukotriene D4 biosynthesis.</text>
</comment>
<comment type="subunit">
    <text evidence="2">Heterodimer composed of the light and heavy chains. The active site is located in the light chain.</text>
</comment>
<comment type="subcellular location">
    <subcellularLocation>
        <location evidence="2">Cell membrane</location>
        <topology evidence="1">Single-pass type II membrane protein</topology>
    </subcellularLocation>
</comment>
<comment type="tissue specificity">
    <text>Highly expressed in kidney. Detected at lower levels in liver, lung, plexus choroideus and brain capillary endothelial cells.</text>
</comment>
<comment type="PTM">
    <text evidence="2">N-glycosylated on both chains.</text>
</comment>
<comment type="PTM">
    <text evidence="2">Cleaved by autocatalysis into a large and a small subunit and the autocatalytic cleavage is essential to the functional activation of the enzyme.</text>
</comment>
<comment type="similarity">
    <text evidence="4">Belongs to the gamma-glutamyltransferase family.</text>
</comment>
<keyword id="KW-0012">Acyltransferase</keyword>
<keyword id="KW-1003">Cell membrane</keyword>
<keyword id="KW-1015">Disulfide bond</keyword>
<keyword id="KW-0317">Glutathione biosynthesis</keyword>
<keyword id="KW-0325">Glycoprotein</keyword>
<keyword id="KW-0378">Hydrolase</keyword>
<keyword id="KW-0472">Membrane</keyword>
<keyword id="KW-0645">Protease</keyword>
<keyword id="KW-1185">Reference proteome</keyword>
<keyword id="KW-0735">Signal-anchor</keyword>
<keyword id="KW-0808">Transferase</keyword>
<keyword id="KW-0812">Transmembrane</keyword>
<keyword id="KW-1133">Transmembrane helix</keyword>
<keyword id="KW-0865">Zymogen</keyword>
<sequence>MKKRYLLLALAAVALVLLILGLCLWLPSNSKPHNHVYPRAAVAADALRCSEIGRDTLRDGGSAVDAAIAALLCVGLMNAHSMGIGGGLFLTIYNSTTRKAEIINAREVAPRLASASMFNSSEQSEEGGLSVAVPGEIRGYELAHQRHGRLPWARLFQPSIELASQGFPVGKGLAAALERSQDAIKRHPALCEVFCRNGNVLREGDLVTMPRLAKTYETLAVEGAQAFYNGSLTAQIVKDIQEAGGIVTAEDLNNYRAELIEQPLRISLGDAQLYAPNAPLSGPVLALILNILKGYNFSRASVETPEQKGLTYHRIVEAFRFAYAKRTLLGDPKFVNVTEVVRNMSSEFFADQLRARISDTTTHPDSYYEPEFYTPDDAGTAHLSVVSDDGSAVSATSTINLYFGSKVRSRISGILFNDEMDDFSSPNITNQFGVRPSPANFITPGKQPLSSMCPVIIVGEDGQVRMVVGASGGTQITTSTALAIIHSLWFGYDVKRAVEEPRLHNQLLPNTTTLEKGIDQAVAAALKTRHHYIQDASTFIGVVQAIVRTPSGWAAASDSRKGGEPAGY</sequence>
<accession>P20735</accession>
<accession>A5A784</accession>
<protein>
    <recommendedName>
        <fullName>Glutathione hydrolase 1 proenzyme</fullName>
        <ecNumber evidence="2">3.4.19.13</ecNumber>
    </recommendedName>
    <alternativeName>
        <fullName>Gamma-glutamyltransferase 1</fullName>
    </alternativeName>
    <alternativeName>
        <fullName>Gamma-glutamyltranspeptidase 1</fullName>
        <shortName>GGT 1</shortName>
        <ecNumber evidence="2">2.3.2.2</ecNumber>
    </alternativeName>
    <alternativeName>
        <fullName>Leukotriene-C4 hydrolase</fullName>
        <ecNumber evidence="1">3.4.19.14</ecNumber>
    </alternativeName>
    <cdAntigenName>CD224</cdAntigenName>
    <component>
        <recommendedName>
            <fullName>Glutathione hydrolase 1 heavy chain</fullName>
        </recommendedName>
    </component>
    <component>
        <recommendedName>
            <fullName>Glutathione hydrolase 1 light chain</fullName>
        </recommendedName>
    </component>
</protein>
<proteinExistence type="evidence at transcript level"/>
<gene>
    <name type="primary">GGT1</name>
    <name type="synonym">GGT</name>
</gene>